<sequence>MGLKIHRPRRGSMAYYPRKRASDIVPRIRNWPVIDLGKPTLLGFVGYKAGMVHVTVVDDRKTSPFFGKELVKAVTVVETPPLYVVGLRAYAINPLKAELVSVGEAWVNIPNEVRKYIARRIPTLPEKFDTDKALADLQGLLDSVSYIKVIAMTQPYKAGVGKKTPEVLEIPVGGVPTIDEQFKYASGLLGKEVKPTDVFKPGQLVDVIGVTKGKGTQGVIKRFGVKELPRWHKHRKGSRRTGTVGPKPAVMYTQPRMGQMGFHRRTEYNKRILKISDNGSEITPKGGFKHYGIVRSGYMLIEGSTPGVVKRLIAFRYPIRPPFNYDLKQVQAPSVTWVSVMGVSGVS</sequence>
<reference key="1">
    <citation type="submission" date="2007-10" db="EMBL/GenBank/DDBJ databases">
        <title>Complete sequence of Caldivirga maquilingensis IC-167.</title>
        <authorList>
            <consortium name="US DOE Joint Genome Institute"/>
            <person name="Copeland A."/>
            <person name="Lucas S."/>
            <person name="Lapidus A."/>
            <person name="Barry K."/>
            <person name="Glavina del Rio T."/>
            <person name="Dalin E."/>
            <person name="Tice H."/>
            <person name="Pitluck S."/>
            <person name="Saunders E."/>
            <person name="Brettin T."/>
            <person name="Bruce D."/>
            <person name="Detter J.C."/>
            <person name="Han C."/>
            <person name="Schmutz J."/>
            <person name="Larimer F."/>
            <person name="Land M."/>
            <person name="Hauser L."/>
            <person name="Kyrpides N."/>
            <person name="Ivanova N."/>
            <person name="Biddle J.F."/>
            <person name="Zhang Z."/>
            <person name="Fitz-Gibbon S.T."/>
            <person name="Lowe T.M."/>
            <person name="Saltikov C."/>
            <person name="House C.H."/>
            <person name="Richardson P."/>
        </authorList>
    </citation>
    <scope>NUCLEOTIDE SEQUENCE [LARGE SCALE GENOMIC DNA]</scope>
    <source>
        <strain>ATCC 700844 / DSM 13496 / JCM 10307 / IC-167</strain>
    </source>
</reference>
<proteinExistence type="inferred from homology"/>
<accession>A8MB75</accession>
<organism>
    <name type="scientific">Caldivirga maquilingensis (strain ATCC 700844 / DSM 13496 / JCM 10307 / IC-167)</name>
    <dbReference type="NCBI Taxonomy" id="397948"/>
    <lineage>
        <taxon>Archaea</taxon>
        <taxon>Thermoproteota</taxon>
        <taxon>Thermoprotei</taxon>
        <taxon>Thermoproteales</taxon>
        <taxon>Thermoproteaceae</taxon>
        <taxon>Caldivirga</taxon>
    </lineage>
</organism>
<feature type="chain" id="PRO_0000353621" description="Large ribosomal subunit protein uL3">
    <location>
        <begin position="1"/>
        <end position="347"/>
    </location>
</feature>
<dbReference type="EMBL" id="CP000852">
    <property type="protein sequence ID" value="ABW01165.1"/>
    <property type="molecule type" value="Genomic_DNA"/>
</dbReference>
<dbReference type="RefSeq" id="WP_012185385.1">
    <property type="nucleotide sequence ID" value="NC_009954.1"/>
</dbReference>
<dbReference type="SMR" id="A8MB75"/>
<dbReference type="STRING" id="397948.Cmaq_0317"/>
<dbReference type="GeneID" id="5710162"/>
<dbReference type="KEGG" id="cma:Cmaq_0317"/>
<dbReference type="eggNOG" id="arCOG04070">
    <property type="taxonomic scope" value="Archaea"/>
</dbReference>
<dbReference type="HOGENOM" id="CLU_033361_2_0_2"/>
<dbReference type="OrthoDB" id="6121at2157"/>
<dbReference type="Proteomes" id="UP000001137">
    <property type="component" value="Chromosome"/>
</dbReference>
<dbReference type="GO" id="GO:0022625">
    <property type="term" value="C:cytosolic large ribosomal subunit"/>
    <property type="evidence" value="ECO:0007669"/>
    <property type="project" value="TreeGrafter"/>
</dbReference>
<dbReference type="GO" id="GO:0019843">
    <property type="term" value="F:rRNA binding"/>
    <property type="evidence" value="ECO:0007669"/>
    <property type="project" value="UniProtKB-UniRule"/>
</dbReference>
<dbReference type="GO" id="GO:0003735">
    <property type="term" value="F:structural constituent of ribosome"/>
    <property type="evidence" value="ECO:0007669"/>
    <property type="project" value="InterPro"/>
</dbReference>
<dbReference type="GO" id="GO:0006412">
    <property type="term" value="P:translation"/>
    <property type="evidence" value="ECO:0007669"/>
    <property type="project" value="UniProtKB-UniRule"/>
</dbReference>
<dbReference type="Gene3D" id="3.30.1430.10">
    <property type="match status" value="1"/>
</dbReference>
<dbReference type="Gene3D" id="4.10.960.10">
    <property type="entry name" value="Ribosomal protein L3, domain 3"/>
    <property type="match status" value="1"/>
</dbReference>
<dbReference type="Gene3D" id="2.40.30.10">
    <property type="entry name" value="Translation factors"/>
    <property type="match status" value="1"/>
</dbReference>
<dbReference type="HAMAP" id="MF_01325_A">
    <property type="entry name" value="Ribosomal_uL3_A"/>
    <property type="match status" value="1"/>
</dbReference>
<dbReference type="InterPro" id="IPR045077">
    <property type="entry name" value="L3_arc_euk"/>
</dbReference>
<dbReference type="InterPro" id="IPR044892">
    <property type="entry name" value="Ribosomal_L3_dom_3_arc_sf"/>
</dbReference>
<dbReference type="InterPro" id="IPR000597">
    <property type="entry name" value="Ribosomal_uL3"/>
</dbReference>
<dbReference type="InterPro" id="IPR019928">
    <property type="entry name" value="Ribosomal_uL3_arc"/>
</dbReference>
<dbReference type="InterPro" id="IPR019926">
    <property type="entry name" value="Ribosomal_uL3_CS"/>
</dbReference>
<dbReference type="InterPro" id="IPR009000">
    <property type="entry name" value="Transl_B-barrel_sf"/>
</dbReference>
<dbReference type="NCBIfam" id="TIGR03626">
    <property type="entry name" value="L3_arch"/>
    <property type="match status" value="1"/>
</dbReference>
<dbReference type="NCBIfam" id="NF003261">
    <property type="entry name" value="PRK04231.1"/>
    <property type="match status" value="1"/>
</dbReference>
<dbReference type="PANTHER" id="PTHR11363">
    <property type="entry name" value="60S RIBOSOMAL PROTEIN L3-RELATED"/>
    <property type="match status" value="1"/>
</dbReference>
<dbReference type="PANTHER" id="PTHR11363:SF5">
    <property type="entry name" value="LARGE RIBOSOMAL SUBUNIT PROTEIN UL3"/>
    <property type="match status" value="1"/>
</dbReference>
<dbReference type="Pfam" id="PF00297">
    <property type="entry name" value="Ribosomal_L3"/>
    <property type="match status" value="1"/>
</dbReference>
<dbReference type="SUPFAM" id="SSF50447">
    <property type="entry name" value="Translation proteins"/>
    <property type="match status" value="1"/>
</dbReference>
<dbReference type="PROSITE" id="PS00474">
    <property type="entry name" value="RIBOSOMAL_L3"/>
    <property type="match status" value="1"/>
</dbReference>
<name>RL3_CALMQ</name>
<gene>
    <name evidence="1" type="primary">rpl3</name>
    <name type="ordered locus">Cmaq_0317</name>
</gene>
<protein>
    <recommendedName>
        <fullName evidence="1">Large ribosomal subunit protein uL3</fullName>
    </recommendedName>
    <alternativeName>
        <fullName evidence="2">50S ribosomal protein L3</fullName>
    </alternativeName>
</protein>
<comment type="function">
    <text evidence="1">One of the primary rRNA binding proteins, it binds directly near the 3'-end of the 23S rRNA, where it nucleates assembly of the 50S subunit.</text>
</comment>
<comment type="subunit">
    <text evidence="1">Part of the 50S ribosomal subunit. Forms a cluster with proteins L14 and L24e.</text>
</comment>
<comment type="similarity">
    <text evidence="1">Belongs to the universal ribosomal protein uL3 family.</text>
</comment>
<keyword id="KW-1185">Reference proteome</keyword>
<keyword id="KW-0687">Ribonucleoprotein</keyword>
<keyword id="KW-0689">Ribosomal protein</keyword>
<keyword id="KW-0694">RNA-binding</keyword>
<keyword id="KW-0699">rRNA-binding</keyword>
<evidence type="ECO:0000255" key="1">
    <source>
        <dbReference type="HAMAP-Rule" id="MF_01325"/>
    </source>
</evidence>
<evidence type="ECO:0000305" key="2"/>